<gene>
    <name evidence="1" type="primary">pnp</name>
    <name type="ordered locus">MT2853</name>
</gene>
<protein>
    <recommendedName>
        <fullName evidence="1">Polyribonucleotide nucleotidyltransferase</fullName>
        <ecNumber evidence="1">2.7.7.8</ecNumber>
    </recommendedName>
    <alternativeName>
        <fullName evidence="1">Polynucleotide phosphorylase</fullName>
        <shortName evidence="1">PNPase</shortName>
    </alternativeName>
</protein>
<organism>
    <name type="scientific">Mycobacterium tuberculosis (strain CDC 1551 / Oshkosh)</name>
    <dbReference type="NCBI Taxonomy" id="83331"/>
    <lineage>
        <taxon>Bacteria</taxon>
        <taxon>Bacillati</taxon>
        <taxon>Actinomycetota</taxon>
        <taxon>Actinomycetes</taxon>
        <taxon>Mycobacteriales</taxon>
        <taxon>Mycobacteriaceae</taxon>
        <taxon>Mycobacterium</taxon>
        <taxon>Mycobacterium tuberculosis complex</taxon>
    </lineage>
</organism>
<sequence length="752" mass="79735">MSAAEIDEGVFETTATIDNGSFGTRTIRFETGRLALQAAGAVVAYLDDDNMLLSATTASKNPKEHFDFFPLTVDVEERMYAAGRIPGSFFRREGRPSTDAILTCRLIDRPLRPSFVDGLRNEIQIVVTILSLDPGDLYDVLAINAASASTQLGGLPFSGPIGGVRVALIDGTWVGFPTVDQIERAVFDMVVAGRIVEGDVAIMMVEAEATENVVELVEGGAQAPTESVVAAGLEAAKPFIAALCTAQQELADAAGKSGKPTVDFPVFPDYGEDVYYSVSSVATDELAAALTIGGKAERDQRIDEIKTQVVQRLADTYEGREKEVGAALRALTKKLVRQRILTDHFRIDGRGITDIRALSAEVAVVPRAHGSALFERGETQILGVTTLDMIKMAQQIDSLGPETSKRYMHHYNFPPFSTGETGRVGSPKRREIGHGALAERALVPVLPSVEEFPYAIRQVSEALGSNGSTSMGSVCASTLALLNAGVPLKAPVAGIAMGLVSDDIQVEGAVDGVVERRFVTLTDILGAEDAFGDMDFKVAGTKDFVTALQLDTKLDGIPSQVLAGALEQAKDARLTILEVMAEAIDRPDEMSPYAPRVTTIKVPVDKIGEVIGPKGKVINAITEETGAQISIEDDGTVFVGATDGPSAQAAIDKINAIANPQLPTVGERFLGTVVKTTDFGAFVSLLPGRDGLVHISKLGKGKRIAKVEDVVNVGDKLRVEIADIDKRGKISLILVADEDSTAAATDAATVTS</sequence>
<name>PNP_MYCTO</name>
<proteinExistence type="inferred from homology"/>
<reference key="1">
    <citation type="journal article" date="2002" name="J. Bacteriol.">
        <title>Whole-genome comparison of Mycobacterium tuberculosis clinical and laboratory strains.</title>
        <authorList>
            <person name="Fleischmann R.D."/>
            <person name="Alland D."/>
            <person name="Eisen J.A."/>
            <person name="Carpenter L."/>
            <person name="White O."/>
            <person name="Peterson J.D."/>
            <person name="DeBoy R.T."/>
            <person name="Dodson R.J."/>
            <person name="Gwinn M.L."/>
            <person name="Haft D.H."/>
            <person name="Hickey E.K."/>
            <person name="Kolonay J.F."/>
            <person name="Nelson W.C."/>
            <person name="Umayam L.A."/>
            <person name="Ermolaeva M.D."/>
            <person name="Salzberg S.L."/>
            <person name="Delcher A."/>
            <person name="Utterback T.R."/>
            <person name="Weidman J.F."/>
            <person name="Khouri H.M."/>
            <person name="Gill J."/>
            <person name="Mikula A."/>
            <person name="Bishai W."/>
            <person name="Jacobs W.R. Jr."/>
            <person name="Venter J.C."/>
            <person name="Fraser C.M."/>
        </authorList>
    </citation>
    <scope>NUCLEOTIDE SEQUENCE [LARGE SCALE GENOMIC DNA]</scope>
    <source>
        <strain>CDC 1551 / Oshkosh</strain>
    </source>
</reference>
<comment type="function">
    <text evidence="1">Involved in mRNA degradation. Catalyzes the phosphorolysis of single-stranded polyribonucleotides processively in the 3'- to 5'-direction.</text>
</comment>
<comment type="catalytic activity">
    <reaction evidence="1">
        <text>RNA(n+1) + phosphate = RNA(n) + a ribonucleoside 5'-diphosphate</text>
        <dbReference type="Rhea" id="RHEA:22096"/>
        <dbReference type="Rhea" id="RHEA-COMP:14527"/>
        <dbReference type="Rhea" id="RHEA-COMP:17342"/>
        <dbReference type="ChEBI" id="CHEBI:43474"/>
        <dbReference type="ChEBI" id="CHEBI:57930"/>
        <dbReference type="ChEBI" id="CHEBI:140395"/>
        <dbReference type="EC" id="2.7.7.8"/>
    </reaction>
</comment>
<comment type="cofactor">
    <cofactor evidence="1">
        <name>Mg(2+)</name>
        <dbReference type="ChEBI" id="CHEBI:18420"/>
    </cofactor>
</comment>
<comment type="subcellular location">
    <subcellularLocation>
        <location evidence="1">Cytoplasm</location>
    </subcellularLocation>
</comment>
<comment type="similarity">
    <text evidence="1">Belongs to the polyribonucleotide nucleotidyltransferase family.</text>
</comment>
<feature type="chain" id="PRO_0000428065" description="Polyribonucleotide nucleotidyltransferase">
    <location>
        <begin position="1"/>
        <end position="752"/>
    </location>
</feature>
<feature type="domain" description="KH" evidence="1">
    <location>
        <begin position="595"/>
        <end position="654"/>
    </location>
</feature>
<feature type="domain" description="S1 motif" evidence="1">
    <location>
        <begin position="666"/>
        <end position="735"/>
    </location>
</feature>
<feature type="binding site" evidence="1">
    <location>
        <position position="529"/>
    </location>
    <ligand>
        <name>Mg(2+)</name>
        <dbReference type="ChEBI" id="CHEBI:18420"/>
    </ligand>
</feature>
<feature type="binding site" evidence="1">
    <location>
        <position position="535"/>
    </location>
    <ligand>
        <name>Mg(2+)</name>
        <dbReference type="ChEBI" id="CHEBI:18420"/>
    </ligand>
</feature>
<evidence type="ECO:0000255" key="1">
    <source>
        <dbReference type="HAMAP-Rule" id="MF_01595"/>
    </source>
</evidence>
<accession>P9WI56</accession>
<accession>L0TDJ4</accession>
<accession>O33325</accession>
<accession>Q7D6L0</accession>
<keyword id="KW-0963">Cytoplasm</keyword>
<keyword id="KW-0460">Magnesium</keyword>
<keyword id="KW-0479">Metal-binding</keyword>
<keyword id="KW-0548">Nucleotidyltransferase</keyword>
<keyword id="KW-1185">Reference proteome</keyword>
<keyword id="KW-0694">RNA-binding</keyword>
<keyword id="KW-0808">Transferase</keyword>
<dbReference type="EC" id="2.7.7.8" evidence="1"/>
<dbReference type="EMBL" id="AE000516">
    <property type="protein sequence ID" value="AAK47172.1"/>
    <property type="molecule type" value="Genomic_DNA"/>
</dbReference>
<dbReference type="PIR" id="F70883">
    <property type="entry name" value="F70883"/>
</dbReference>
<dbReference type="RefSeq" id="WP_003414124.1">
    <property type="nucleotide sequence ID" value="NZ_KK341227.1"/>
</dbReference>
<dbReference type="SMR" id="P9WI56"/>
<dbReference type="KEGG" id="mtc:MT2853"/>
<dbReference type="PATRIC" id="fig|83331.31.peg.3076"/>
<dbReference type="HOGENOM" id="CLU_004217_2_2_11"/>
<dbReference type="Proteomes" id="UP000001020">
    <property type="component" value="Chromosome"/>
</dbReference>
<dbReference type="GO" id="GO:0005829">
    <property type="term" value="C:cytosol"/>
    <property type="evidence" value="ECO:0007669"/>
    <property type="project" value="TreeGrafter"/>
</dbReference>
<dbReference type="GO" id="GO:0000175">
    <property type="term" value="F:3'-5'-RNA exonuclease activity"/>
    <property type="evidence" value="ECO:0007669"/>
    <property type="project" value="TreeGrafter"/>
</dbReference>
<dbReference type="GO" id="GO:0000287">
    <property type="term" value="F:magnesium ion binding"/>
    <property type="evidence" value="ECO:0007669"/>
    <property type="project" value="UniProtKB-UniRule"/>
</dbReference>
<dbReference type="GO" id="GO:0004654">
    <property type="term" value="F:polyribonucleotide nucleotidyltransferase activity"/>
    <property type="evidence" value="ECO:0007669"/>
    <property type="project" value="UniProtKB-UniRule"/>
</dbReference>
<dbReference type="GO" id="GO:0003723">
    <property type="term" value="F:RNA binding"/>
    <property type="evidence" value="ECO:0007669"/>
    <property type="project" value="UniProtKB-UniRule"/>
</dbReference>
<dbReference type="GO" id="GO:0006402">
    <property type="term" value="P:mRNA catabolic process"/>
    <property type="evidence" value="ECO:0007669"/>
    <property type="project" value="UniProtKB-UniRule"/>
</dbReference>
<dbReference type="GO" id="GO:0006396">
    <property type="term" value="P:RNA processing"/>
    <property type="evidence" value="ECO:0007669"/>
    <property type="project" value="InterPro"/>
</dbReference>
<dbReference type="CDD" id="cd02393">
    <property type="entry name" value="KH-I_PNPase"/>
    <property type="match status" value="1"/>
</dbReference>
<dbReference type="CDD" id="cd11364">
    <property type="entry name" value="RNase_PH_PNPase_2"/>
    <property type="match status" value="1"/>
</dbReference>
<dbReference type="CDD" id="cd04472">
    <property type="entry name" value="S1_PNPase"/>
    <property type="match status" value="1"/>
</dbReference>
<dbReference type="FunFam" id="2.40.50.140:FF:000069">
    <property type="entry name" value="Polyribonucleotide nucleotidyltransferase"/>
    <property type="match status" value="1"/>
</dbReference>
<dbReference type="FunFam" id="3.30.1370.10:FF:000001">
    <property type="entry name" value="Polyribonucleotide nucleotidyltransferase"/>
    <property type="match status" value="1"/>
</dbReference>
<dbReference type="FunFam" id="3.30.230.70:FF:000001">
    <property type="entry name" value="Polyribonucleotide nucleotidyltransferase"/>
    <property type="match status" value="1"/>
</dbReference>
<dbReference type="FunFam" id="3.30.230.70:FF:000002">
    <property type="entry name" value="Polyribonucleotide nucleotidyltransferase"/>
    <property type="match status" value="1"/>
</dbReference>
<dbReference type="Gene3D" id="3.30.230.70">
    <property type="entry name" value="GHMP Kinase, N-terminal domain"/>
    <property type="match status" value="2"/>
</dbReference>
<dbReference type="Gene3D" id="3.30.1370.10">
    <property type="entry name" value="K Homology domain, type 1"/>
    <property type="match status" value="1"/>
</dbReference>
<dbReference type="Gene3D" id="2.40.50.140">
    <property type="entry name" value="Nucleic acid-binding proteins"/>
    <property type="match status" value="1"/>
</dbReference>
<dbReference type="HAMAP" id="MF_01595">
    <property type="entry name" value="PNPase"/>
    <property type="match status" value="1"/>
</dbReference>
<dbReference type="InterPro" id="IPR001247">
    <property type="entry name" value="ExoRNase_PH_dom1"/>
</dbReference>
<dbReference type="InterPro" id="IPR036345">
    <property type="entry name" value="ExoRNase_PH_dom2_sf"/>
</dbReference>
<dbReference type="InterPro" id="IPR014069">
    <property type="entry name" value="GPSI/PNP"/>
</dbReference>
<dbReference type="InterPro" id="IPR004087">
    <property type="entry name" value="KH_dom"/>
</dbReference>
<dbReference type="InterPro" id="IPR004088">
    <property type="entry name" value="KH_dom_type_1"/>
</dbReference>
<dbReference type="InterPro" id="IPR036612">
    <property type="entry name" value="KH_dom_type_1_sf"/>
</dbReference>
<dbReference type="InterPro" id="IPR012340">
    <property type="entry name" value="NA-bd_OB-fold"/>
</dbReference>
<dbReference type="InterPro" id="IPR012162">
    <property type="entry name" value="PNPase"/>
</dbReference>
<dbReference type="InterPro" id="IPR027408">
    <property type="entry name" value="PNPase/RNase_PH_dom_sf"/>
</dbReference>
<dbReference type="InterPro" id="IPR015848">
    <property type="entry name" value="PNPase_PH_RNA-bd_bac/org-type"/>
</dbReference>
<dbReference type="InterPro" id="IPR036456">
    <property type="entry name" value="PNPase_PH_RNA-bd_sf"/>
</dbReference>
<dbReference type="InterPro" id="IPR020568">
    <property type="entry name" value="Ribosomal_Su5_D2-typ_SF"/>
</dbReference>
<dbReference type="InterPro" id="IPR003029">
    <property type="entry name" value="S1_domain"/>
</dbReference>
<dbReference type="NCBIfam" id="TIGR03591">
    <property type="entry name" value="polynuc_phos"/>
    <property type="match status" value="1"/>
</dbReference>
<dbReference type="NCBIfam" id="TIGR02696">
    <property type="entry name" value="pppGpp_PNP"/>
    <property type="match status" value="1"/>
</dbReference>
<dbReference type="NCBIfam" id="NF008805">
    <property type="entry name" value="PRK11824.1"/>
    <property type="match status" value="1"/>
</dbReference>
<dbReference type="PANTHER" id="PTHR11252">
    <property type="entry name" value="POLYRIBONUCLEOTIDE NUCLEOTIDYLTRANSFERASE"/>
    <property type="match status" value="1"/>
</dbReference>
<dbReference type="PANTHER" id="PTHR11252:SF0">
    <property type="entry name" value="POLYRIBONUCLEOTIDE NUCLEOTIDYLTRANSFERASE 1, MITOCHONDRIAL"/>
    <property type="match status" value="1"/>
</dbReference>
<dbReference type="Pfam" id="PF00013">
    <property type="entry name" value="KH_1"/>
    <property type="match status" value="1"/>
</dbReference>
<dbReference type="Pfam" id="PF03726">
    <property type="entry name" value="PNPase"/>
    <property type="match status" value="1"/>
</dbReference>
<dbReference type="Pfam" id="PF01138">
    <property type="entry name" value="RNase_PH"/>
    <property type="match status" value="2"/>
</dbReference>
<dbReference type="Pfam" id="PF00575">
    <property type="entry name" value="S1"/>
    <property type="match status" value="1"/>
</dbReference>
<dbReference type="PIRSF" id="PIRSF005499">
    <property type="entry name" value="PNPase"/>
    <property type="match status" value="1"/>
</dbReference>
<dbReference type="SMART" id="SM00322">
    <property type="entry name" value="KH"/>
    <property type="match status" value="1"/>
</dbReference>
<dbReference type="SMART" id="SM00316">
    <property type="entry name" value="S1"/>
    <property type="match status" value="1"/>
</dbReference>
<dbReference type="SUPFAM" id="SSF54791">
    <property type="entry name" value="Eukaryotic type KH-domain (KH-domain type I)"/>
    <property type="match status" value="1"/>
</dbReference>
<dbReference type="SUPFAM" id="SSF50249">
    <property type="entry name" value="Nucleic acid-binding proteins"/>
    <property type="match status" value="1"/>
</dbReference>
<dbReference type="SUPFAM" id="SSF46915">
    <property type="entry name" value="Polynucleotide phosphorylase/guanosine pentaphosphate synthase (PNPase/GPSI), domain 3"/>
    <property type="match status" value="1"/>
</dbReference>
<dbReference type="SUPFAM" id="SSF55666">
    <property type="entry name" value="Ribonuclease PH domain 2-like"/>
    <property type="match status" value="2"/>
</dbReference>
<dbReference type="SUPFAM" id="SSF54211">
    <property type="entry name" value="Ribosomal protein S5 domain 2-like"/>
    <property type="match status" value="2"/>
</dbReference>
<dbReference type="PROSITE" id="PS50084">
    <property type="entry name" value="KH_TYPE_1"/>
    <property type="match status" value="1"/>
</dbReference>
<dbReference type="PROSITE" id="PS50126">
    <property type="entry name" value="S1"/>
    <property type="match status" value="1"/>
</dbReference>